<protein>
    <recommendedName>
        <fullName>Putative postmeiotic segregation increased 2-like protein 3</fullName>
    </recommendedName>
    <alternativeName>
        <fullName>PMS2-related protein 3</fullName>
    </alternativeName>
    <alternativeName>
        <fullName>Postmeiotic segregation increased 2-like protein 9</fullName>
    </alternativeName>
    <alternativeName>
        <fullName>Postmeiotic segregation increased protein 5</fullName>
    </alternativeName>
    <alternativeName>
        <fullName>Putative postmeiotic segregation increased 2 pseudogene 3</fullName>
    </alternativeName>
</protein>
<feature type="chain" id="PRO_0000311100" description="Putative postmeiotic segregation increased 2-like protein 3">
    <location>
        <begin position="1"/>
        <end position="168"/>
    </location>
</feature>
<feature type="domain" description="KRAB" evidence="1">
    <location>
        <begin position="8"/>
        <end position="84"/>
    </location>
</feature>
<feature type="splice variant" id="VSP_040289" description="In isoform 3." evidence="2">
    <original>EPAKAIKPIDRKSVHQICSGPVVLSLSTAVKELVENSLDAGATNIDLKLKDYGVDLIEVSDNGCGVEEENFEGLISFSSETSHM</original>
    <variation>VQNLLRPSNLLIGSQSIRFALGQWY</variation>
    <location>
        <begin position="85"/>
        <end position="168"/>
    </location>
</feature>
<feature type="splice variant" id="VSP_040290" description="In isoform 2." evidence="2">
    <original>ISFSSETSHM</original>
    <variation>TMSPFLPATRR</variation>
    <location>
        <begin position="159"/>
        <end position="168"/>
    </location>
</feature>
<feature type="sequence conflict" description="In Ref. 5; BC029646." evidence="3" ref="5">
    <original>R</original>
    <variation>W</variation>
    <location>
        <position position="23"/>
    </location>
</feature>
<evidence type="ECO:0000255" key="1">
    <source>
        <dbReference type="PROSITE-ProRule" id="PRU00119"/>
    </source>
</evidence>
<evidence type="ECO:0000303" key="2">
    <source>
    </source>
</evidence>
<evidence type="ECO:0000305" key="3"/>
<gene>
    <name type="primary">PMS2P3</name>
    <name type="synonym">PMS2L3</name>
    <name type="synonym">PMS2L9</name>
    <name type="synonym">PMS5</name>
    <name type="synonym">PMSR3</name>
</gene>
<name>PM2P3_HUMAN</name>
<reference key="1">
    <citation type="journal article" date="1995" name="Genomics">
        <title>Genomic organization of the human PMS2 gene family.</title>
        <authorList>
            <person name="Nicolaides N.C."/>
            <person name="Carter K.C."/>
            <person name="Shell B.K."/>
            <person name="Papadopoulos N."/>
            <person name="Vogelstein B."/>
            <person name="Kinzler K.W."/>
        </authorList>
    </citation>
    <scope>NUCLEOTIDE SEQUENCE [GENOMIC DNA]</scope>
    <scope>ALTERNATIVE SPLICING (ISOFORM 1)</scope>
    <source>
        <tissue>Small intestine</tissue>
    </source>
</reference>
<reference key="2">
    <citation type="submission" date="1995-10" db="EMBL/GenBank/DDBJ databases">
        <title>Full-length cDNA libraries and normalization.</title>
        <authorList>
            <person name="Li W.B."/>
            <person name="Gruber C."/>
            <person name="Jessee J."/>
            <person name="Polayes D."/>
        </authorList>
    </citation>
    <scope>NUCLEOTIDE SEQUENCE [LARGE SCALE MRNA] (ISOFORM 1)</scope>
</reference>
<reference key="3">
    <citation type="journal article" date="2003" name="Nature">
        <title>The DNA sequence of human chromosome 7.</title>
        <authorList>
            <person name="Hillier L.W."/>
            <person name="Fulton R.S."/>
            <person name="Fulton L.A."/>
            <person name="Graves T.A."/>
            <person name="Pepin K.H."/>
            <person name="Wagner-McPherson C."/>
            <person name="Layman D."/>
            <person name="Maas J."/>
            <person name="Jaeger S."/>
            <person name="Walker R."/>
            <person name="Wylie K."/>
            <person name="Sekhon M."/>
            <person name="Becker M.C."/>
            <person name="O'Laughlin M.D."/>
            <person name="Schaller M.E."/>
            <person name="Fewell G.A."/>
            <person name="Delehaunty K.D."/>
            <person name="Miner T.L."/>
            <person name="Nash W.E."/>
            <person name="Cordes M."/>
            <person name="Du H."/>
            <person name="Sun H."/>
            <person name="Edwards J."/>
            <person name="Bradshaw-Cordum H."/>
            <person name="Ali J."/>
            <person name="Andrews S."/>
            <person name="Isak A."/>
            <person name="Vanbrunt A."/>
            <person name="Nguyen C."/>
            <person name="Du F."/>
            <person name="Lamar B."/>
            <person name="Courtney L."/>
            <person name="Kalicki J."/>
            <person name="Ozersky P."/>
            <person name="Bielicki L."/>
            <person name="Scott K."/>
            <person name="Holmes A."/>
            <person name="Harkins R."/>
            <person name="Harris A."/>
            <person name="Strong C.M."/>
            <person name="Hou S."/>
            <person name="Tomlinson C."/>
            <person name="Dauphin-Kohlberg S."/>
            <person name="Kozlowicz-Reilly A."/>
            <person name="Leonard S."/>
            <person name="Rohlfing T."/>
            <person name="Rock S.M."/>
            <person name="Tin-Wollam A.-M."/>
            <person name="Abbott A."/>
            <person name="Minx P."/>
            <person name="Maupin R."/>
            <person name="Strowmatt C."/>
            <person name="Latreille P."/>
            <person name="Miller N."/>
            <person name="Johnson D."/>
            <person name="Murray J."/>
            <person name="Woessner J.P."/>
            <person name="Wendl M.C."/>
            <person name="Yang S.-P."/>
            <person name="Schultz B.R."/>
            <person name="Wallis J.W."/>
            <person name="Spieth J."/>
            <person name="Bieri T.A."/>
            <person name="Nelson J.O."/>
            <person name="Berkowicz N."/>
            <person name="Wohldmann P.E."/>
            <person name="Cook L.L."/>
            <person name="Hickenbotham M.T."/>
            <person name="Eldred J."/>
            <person name="Williams D."/>
            <person name="Bedell J.A."/>
            <person name="Mardis E.R."/>
            <person name="Clifton S.W."/>
            <person name="Chissoe S.L."/>
            <person name="Marra M.A."/>
            <person name="Raymond C."/>
            <person name="Haugen E."/>
            <person name="Gillett W."/>
            <person name="Zhou Y."/>
            <person name="James R."/>
            <person name="Phelps K."/>
            <person name="Iadanoto S."/>
            <person name="Bubb K."/>
            <person name="Simms E."/>
            <person name="Levy R."/>
            <person name="Clendenning J."/>
            <person name="Kaul R."/>
            <person name="Kent W.J."/>
            <person name="Furey T.S."/>
            <person name="Baertsch R.A."/>
            <person name="Brent M.R."/>
            <person name="Keibler E."/>
            <person name="Flicek P."/>
            <person name="Bork P."/>
            <person name="Suyama M."/>
            <person name="Bailey J.A."/>
            <person name="Portnoy M.E."/>
            <person name="Torrents D."/>
            <person name="Chinwalla A.T."/>
            <person name="Gish W.R."/>
            <person name="Eddy S.R."/>
            <person name="McPherson J.D."/>
            <person name="Olson M.V."/>
            <person name="Eichler E.E."/>
            <person name="Green E.D."/>
            <person name="Waterston R.H."/>
            <person name="Wilson R.K."/>
        </authorList>
    </citation>
    <scope>NUCLEOTIDE SEQUENCE [LARGE SCALE GENOMIC DNA]</scope>
</reference>
<reference key="4">
    <citation type="submission" date="2005-07" db="EMBL/GenBank/DDBJ databases">
        <authorList>
            <person name="Mural R.J."/>
            <person name="Istrail S."/>
            <person name="Sutton G.G."/>
            <person name="Florea L."/>
            <person name="Halpern A.L."/>
            <person name="Mobarry C.M."/>
            <person name="Lippert R."/>
            <person name="Walenz B."/>
            <person name="Shatkay H."/>
            <person name="Dew I."/>
            <person name="Miller J.R."/>
            <person name="Flanigan M.J."/>
            <person name="Edwards N.J."/>
            <person name="Bolanos R."/>
            <person name="Fasulo D."/>
            <person name="Halldorsson B.V."/>
            <person name="Hannenhalli S."/>
            <person name="Turner R."/>
            <person name="Yooseph S."/>
            <person name="Lu F."/>
            <person name="Nusskern D.R."/>
            <person name="Shue B.C."/>
            <person name="Zheng X.H."/>
            <person name="Zhong F."/>
            <person name="Delcher A.L."/>
            <person name="Huson D.H."/>
            <person name="Kravitz S.A."/>
            <person name="Mouchard L."/>
            <person name="Reinert K."/>
            <person name="Remington K.A."/>
            <person name="Clark A.G."/>
            <person name="Waterman M.S."/>
            <person name="Eichler E.E."/>
            <person name="Adams M.D."/>
            <person name="Hunkapiller M.W."/>
            <person name="Myers E.W."/>
            <person name="Venter J.C."/>
        </authorList>
    </citation>
    <scope>NUCLEOTIDE SEQUENCE [LARGE SCALE GENOMIC DNA]</scope>
</reference>
<reference key="5">
    <citation type="journal article" date="2004" name="Genome Res.">
        <title>The status, quality, and expansion of the NIH full-length cDNA project: the Mammalian Gene Collection (MGC).</title>
        <authorList>
            <consortium name="The MGC Project Team"/>
        </authorList>
    </citation>
    <scope>NUCLEOTIDE SEQUENCE [LARGE SCALE MRNA] (ISOFORMS 2 AND 3)</scope>
    <source>
        <tissue>Brain</tissue>
    </source>
</reference>
<proteinExistence type="uncertain"/>
<comment type="alternative products">
    <event type="alternative splicing"/>
    <isoform>
        <id>Q13401-1</id>
        <name>1</name>
        <sequence type="displayed"/>
    </isoform>
    <isoform>
        <id>Q13401-2</id>
        <name>2</name>
        <sequence type="described" ref="VSP_040290"/>
    </isoform>
    <isoform>
        <id>Q13401-3</id>
        <name>3</name>
        <sequence type="described" ref="VSP_040289"/>
    </isoform>
</comment>
<comment type="miscellaneous">
    <text>Encoded by one of the numerous copies of postmeiotic segregation increased 2-like genes scattered in the q11-q22 region of the chromosome 7.</text>
</comment>
<comment type="similarity">
    <text evidence="3">Belongs to the DNA mismatch repair MutL/HexB family.</text>
</comment>
<comment type="caution">
    <text evidence="3">Could be the product of a pseudogene.</text>
</comment>
<comment type="sequence caution" evidence="3">
    <conflict type="erroneous gene model prediction">
        <sequence resource="EMBL-CDS" id="AAA97459"/>
    </conflict>
</comment>
<dbReference type="EMBL" id="U38979">
    <property type="protein sequence ID" value="AAA97459.1"/>
    <property type="status" value="ALT_SEQ"/>
    <property type="molecule type" value="Genomic_DNA"/>
</dbReference>
<dbReference type="EMBL" id="CR621744">
    <property type="status" value="NOT_ANNOTATED_CDS"/>
    <property type="molecule type" value="mRNA"/>
</dbReference>
<dbReference type="EMBL" id="AC018720">
    <property type="status" value="NOT_ANNOTATED_CDS"/>
    <property type="molecule type" value="Genomic_DNA"/>
</dbReference>
<dbReference type="EMBL" id="CH471220">
    <property type="protein sequence ID" value="EAW71766.1"/>
    <property type="molecule type" value="Genomic_DNA"/>
</dbReference>
<dbReference type="EMBL" id="BC029646">
    <property type="status" value="NOT_ANNOTATED_CDS"/>
    <property type="molecule type" value="mRNA"/>
</dbReference>
<dbReference type="EMBL" id="BC101598">
    <property type="protein sequence ID" value="AAI01599.1"/>
    <property type="molecule type" value="mRNA"/>
</dbReference>
<dbReference type="SMR" id="Q13401"/>
<dbReference type="IntAct" id="Q13401">
    <property type="interactions" value="6"/>
</dbReference>
<dbReference type="GlyGen" id="Q13401">
    <property type="glycosylation" value="1 site, 1 O-linked glycan (1 site)"/>
</dbReference>
<dbReference type="iPTMnet" id="Q13401"/>
<dbReference type="PhosphoSitePlus" id="Q13401"/>
<dbReference type="BioMuta" id="HGNC:9128"/>
<dbReference type="DMDM" id="313104156"/>
<dbReference type="jPOST" id="Q13401"/>
<dbReference type="MassIVE" id="Q13401"/>
<dbReference type="PeptideAtlas" id="Q13401"/>
<dbReference type="AGR" id="HGNC:9128"/>
<dbReference type="GeneCards" id="PMS2P3"/>
<dbReference type="HGNC" id="HGNC:9128">
    <property type="gene designation" value="PMS2P3"/>
</dbReference>
<dbReference type="neXtProt" id="NX_Q13401"/>
<dbReference type="InParanoid" id="Q13401"/>
<dbReference type="PAN-GO" id="Q13401">
    <property type="GO annotations" value="3 GO annotations based on evolutionary models"/>
</dbReference>
<dbReference type="PhylomeDB" id="Q13401"/>
<dbReference type="PathwayCommons" id="Q13401"/>
<dbReference type="SignaLink" id="Q13401"/>
<dbReference type="ChiTaRS" id="PMS2P3">
    <property type="organism name" value="human"/>
</dbReference>
<dbReference type="Pharos" id="Q13401">
    <property type="development level" value="Tdark"/>
</dbReference>
<dbReference type="PRO" id="PR:Q13401"/>
<dbReference type="Proteomes" id="UP000005640">
    <property type="component" value="Unplaced"/>
</dbReference>
<dbReference type="RNAct" id="Q13401">
    <property type="molecule type" value="protein"/>
</dbReference>
<dbReference type="GO" id="GO:0032300">
    <property type="term" value="C:mismatch repair complex"/>
    <property type="evidence" value="ECO:0007669"/>
    <property type="project" value="InterPro"/>
</dbReference>
<dbReference type="GO" id="GO:0016887">
    <property type="term" value="F:ATP hydrolysis activity"/>
    <property type="evidence" value="ECO:0007669"/>
    <property type="project" value="InterPro"/>
</dbReference>
<dbReference type="GO" id="GO:0140664">
    <property type="term" value="F:ATP-dependent DNA damage sensor activity"/>
    <property type="evidence" value="ECO:0007669"/>
    <property type="project" value="InterPro"/>
</dbReference>
<dbReference type="GO" id="GO:0006298">
    <property type="term" value="P:mismatch repair"/>
    <property type="evidence" value="ECO:0007669"/>
    <property type="project" value="InterPro"/>
</dbReference>
<dbReference type="GO" id="GO:0006355">
    <property type="term" value="P:regulation of DNA-templated transcription"/>
    <property type="evidence" value="ECO:0007669"/>
    <property type="project" value="InterPro"/>
</dbReference>
<dbReference type="CDD" id="cd07765">
    <property type="entry name" value="KRAB_A-box"/>
    <property type="match status" value="1"/>
</dbReference>
<dbReference type="FunFam" id="3.30.565.10:FF:000299">
    <property type="entry name" value="Putative postmeiotic segregation increased 2-like protein 11"/>
    <property type="match status" value="1"/>
</dbReference>
<dbReference type="Gene3D" id="6.10.140.140">
    <property type="match status" value="1"/>
</dbReference>
<dbReference type="Gene3D" id="3.30.565.10">
    <property type="entry name" value="Histidine kinase-like ATPase, C-terminal domain"/>
    <property type="match status" value="1"/>
</dbReference>
<dbReference type="InterPro" id="IPR036890">
    <property type="entry name" value="HATPase_C_sf"/>
</dbReference>
<dbReference type="InterPro" id="IPR001909">
    <property type="entry name" value="KRAB"/>
</dbReference>
<dbReference type="InterPro" id="IPR036051">
    <property type="entry name" value="KRAB_dom_sf"/>
</dbReference>
<dbReference type="InterPro" id="IPR038973">
    <property type="entry name" value="MutL/Mlh/Pms-like"/>
</dbReference>
<dbReference type="PANTHER" id="PTHR10073">
    <property type="entry name" value="DNA MISMATCH REPAIR PROTEIN MLH, PMS, MUTL"/>
    <property type="match status" value="1"/>
</dbReference>
<dbReference type="PANTHER" id="PTHR10073:SF52">
    <property type="entry name" value="MISMATCH REPAIR ENDONUCLEASE PMS2"/>
    <property type="match status" value="1"/>
</dbReference>
<dbReference type="Pfam" id="PF13589">
    <property type="entry name" value="HATPase_c_3"/>
    <property type="match status" value="1"/>
</dbReference>
<dbReference type="Pfam" id="PF01352">
    <property type="entry name" value="KRAB"/>
    <property type="match status" value="1"/>
</dbReference>
<dbReference type="SMART" id="SM00349">
    <property type="entry name" value="KRAB"/>
    <property type="match status" value="1"/>
</dbReference>
<dbReference type="SUPFAM" id="SSF55874">
    <property type="entry name" value="ATPase domain of HSP90 chaperone/DNA topoisomerase II/histidine kinase"/>
    <property type="match status" value="1"/>
</dbReference>
<dbReference type="SUPFAM" id="SSF109640">
    <property type="entry name" value="KRAB domain (Kruppel-associated box)"/>
    <property type="match status" value="1"/>
</dbReference>
<dbReference type="PROSITE" id="PS50805">
    <property type="entry name" value="KRAB"/>
    <property type="match status" value="1"/>
</dbReference>
<keyword id="KW-0025">Alternative splicing</keyword>
<keyword id="KW-1185">Reference proteome</keyword>
<organism>
    <name type="scientific">Homo sapiens</name>
    <name type="common">Human</name>
    <dbReference type="NCBI Taxonomy" id="9606"/>
    <lineage>
        <taxon>Eukaryota</taxon>
        <taxon>Metazoa</taxon>
        <taxon>Chordata</taxon>
        <taxon>Craniata</taxon>
        <taxon>Vertebrata</taxon>
        <taxon>Euteleostomi</taxon>
        <taxon>Mammalia</taxon>
        <taxon>Eutheria</taxon>
        <taxon>Euarchontoglires</taxon>
        <taxon>Primates</taxon>
        <taxon>Haplorrhini</taxon>
        <taxon>Catarrhini</taxon>
        <taxon>Hominidae</taxon>
        <taxon>Homo</taxon>
    </lineage>
</organism>
<sequence length="168" mass="18716">MNTLQGPVSFKDVAVDFTQEEWRQLDPDEKIAYGDVMLENYSHLVSVGYDYHQAKHHHGVEVKEVEQGEEPWIMEGEFPCQHSPEPAKAIKPIDRKSVHQICSGPVVLSLSTAVKELVENSLDAGATNIDLKLKDYGVDLIEVSDNGCGVEEENFEGLISFSSETSHM</sequence>
<accession>Q13401</accession>
<accession>A6NG70</accession>
<accession>Q3MJ29</accession>